<sequence length="514" mass="58027">MTLLPGDNSDYDYSALSCASDTSFHPAFFPQRQAIKGVFYRRAQRLGPQDDLHQSISLGDRRRQIIINVGGIKYSLPWTTLDEFPLTRLGQLKACTNFDDILSVCDDYDVTCNEFFFDRNPGAFGTILTFLRAGKLRLLREMCALSFQEELLYWGIAEDHLDGCCKRRYLQKIEEFAEMMEREDEEEALDSEDQESEGPSTSEGRLSRCMRRLRDMVEKPHSGLPGKVFACLSVLFVTVTAVNLSVSTLPSLREEEEQGQCSQMCHNVFIVESVCVGWFSLEFLLRFIQAPSKFAFLRSPLTLIDLVAILPYYVTLLVDGAASSRRKPSTGNSYLDKVGLVLRVLRALRILYVMRLARHSLGLQTLGLTARRCTREFGLLLLFLCVAIALFAPLLYVIENEMADSPEFTSIPACYWWAVITMTTVGYGDMVPRSTPGQVVALSSILSGILLMAFPVTSIFHTFSRSYLELKQEQERVLIRRAQYLIKTKSQLSGMSQDSDILFGSASSDTRDNN</sequence>
<dbReference type="EMBL" id="AABR06027705">
    <property type="status" value="NOT_ANNOTATED_CDS"/>
    <property type="molecule type" value="Genomic_DNA"/>
</dbReference>
<dbReference type="EMBL" id="AABR06027706">
    <property type="status" value="NOT_ANNOTATED_CDS"/>
    <property type="molecule type" value="Genomic_DNA"/>
</dbReference>
<dbReference type="EMBL" id="AABR06027707">
    <property type="status" value="NOT_ANNOTATED_CDS"/>
    <property type="molecule type" value="Genomic_DNA"/>
</dbReference>
<dbReference type="EMBL" id="AABR06027708">
    <property type="status" value="NOT_ANNOTATED_CDS"/>
    <property type="molecule type" value="Genomic_DNA"/>
</dbReference>
<dbReference type="EMBL" id="AABR06027709">
    <property type="status" value="NOT_ANNOTATED_CDS"/>
    <property type="molecule type" value="Genomic_DNA"/>
</dbReference>
<dbReference type="EMBL" id="AABR06027710">
    <property type="status" value="NOT_ANNOTATED_CDS"/>
    <property type="molecule type" value="Genomic_DNA"/>
</dbReference>
<dbReference type="EMBL" id="AABR06027711">
    <property type="status" value="NOT_ANNOTATED_CDS"/>
    <property type="molecule type" value="Genomic_DNA"/>
</dbReference>
<dbReference type="EMBL" id="CH474005">
    <property type="protein sequence ID" value="EDL96362.1"/>
    <property type="molecule type" value="Genomic_DNA"/>
</dbReference>
<dbReference type="EMBL" id="CH474005">
    <property type="protein sequence ID" value="EDL96363.1"/>
    <property type="molecule type" value="Genomic_DNA"/>
</dbReference>
<dbReference type="RefSeq" id="NP_001100015.1">
    <property type="nucleotide sequence ID" value="NM_001106545.2"/>
</dbReference>
<dbReference type="RefSeq" id="NP_001417225.1">
    <property type="nucleotide sequence ID" value="NM_001430296.1"/>
</dbReference>
<dbReference type="RefSeq" id="XP_008760706.1">
    <property type="nucleotide sequence ID" value="XM_008762484.2"/>
</dbReference>
<dbReference type="RefSeq" id="XP_017447105.1">
    <property type="nucleotide sequence ID" value="XM_017591616.1"/>
</dbReference>
<dbReference type="SMR" id="D4AD53"/>
<dbReference type="FunCoup" id="D4AD53">
    <property type="interactions" value="14"/>
</dbReference>
<dbReference type="STRING" id="10116.ENSRNOP00000069311"/>
<dbReference type="GlyGen" id="D4AD53">
    <property type="glycosylation" value="1 site"/>
</dbReference>
<dbReference type="PhosphoSitePlus" id="D4AD53"/>
<dbReference type="PaxDb" id="10116-ENSRNOP00000045232"/>
<dbReference type="Ensembl" id="ENSRNOT00000081648.2">
    <property type="protein sequence ID" value="ENSRNOP00000069311.1"/>
    <property type="gene ID" value="ENSRNOG00000054314.2"/>
</dbReference>
<dbReference type="GeneID" id="296395"/>
<dbReference type="KEGG" id="rno:296395"/>
<dbReference type="UCSC" id="RGD:631416">
    <property type="organism name" value="rat"/>
</dbReference>
<dbReference type="AGR" id="RGD:631416"/>
<dbReference type="CTD" id="3755"/>
<dbReference type="RGD" id="631416">
    <property type="gene designation" value="Kcng1"/>
</dbReference>
<dbReference type="eggNOG" id="KOG3713">
    <property type="taxonomic scope" value="Eukaryota"/>
</dbReference>
<dbReference type="GeneTree" id="ENSGT00940000159686"/>
<dbReference type="HOGENOM" id="CLU_011722_4_1_1"/>
<dbReference type="InParanoid" id="D4AD53"/>
<dbReference type="OMA" id="CAFRNIL"/>
<dbReference type="OrthoDB" id="296522at2759"/>
<dbReference type="PhylomeDB" id="D4AD53"/>
<dbReference type="TreeFam" id="TF313103"/>
<dbReference type="Reactome" id="R-RNO-1296072">
    <property type="pathway name" value="Voltage gated Potassium channels"/>
</dbReference>
<dbReference type="PRO" id="PR:D4AD53"/>
<dbReference type="Proteomes" id="UP000002494">
    <property type="component" value="Chromosome 3"/>
</dbReference>
<dbReference type="Proteomes" id="UP000234681">
    <property type="component" value="Chromosome 3"/>
</dbReference>
<dbReference type="Bgee" id="ENSRNOG00000054314">
    <property type="expression patterns" value="Expressed in frontal cortex and 6 other cell types or tissues"/>
</dbReference>
<dbReference type="GO" id="GO:0016020">
    <property type="term" value="C:membrane"/>
    <property type="evidence" value="ECO:0000318"/>
    <property type="project" value="GO_Central"/>
</dbReference>
<dbReference type="GO" id="GO:0008076">
    <property type="term" value="C:voltage-gated potassium channel complex"/>
    <property type="evidence" value="ECO:0000314"/>
    <property type="project" value="UniProtKB"/>
</dbReference>
<dbReference type="GO" id="GO:0015459">
    <property type="term" value="F:potassium channel regulator activity"/>
    <property type="evidence" value="ECO:0000314"/>
    <property type="project" value="UniProtKB"/>
</dbReference>
<dbReference type="GO" id="GO:0005249">
    <property type="term" value="F:voltage-gated potassium channel activity"/>
    <property type="evidence" value="ECO:0007669"/>
    <property type="project" value="InterPro"/>
</dbReference>
<dbReference type="GO" id="GO:0001508">
    <property type="term" value="P:action potential"/>
    <property type="evidence" value="ECO:0000318"/>
    <property type="project" value="GO_Central"/>
</dbReference>
<dbReference type="GO" id="GO:0071805">
    <property type="term" value="P:potassium ion transmembrane transport"/>
    <property type="evidence" value="ECO:0000318"/>
    <property type="project" value="GO_Central"/>
</dbReference>
<dbReference type="GO" id="GO:0006813">
    <property type="term" value="P:potassium ion transport"/>
    <property type="evidence" value="ECO:0000314"/>
    <property type="project" value="UniProtKB"/>
</dbReference>
<dbReference type="GO" id="GO:0051260">
    <property type="term" value="P:protein homooligomerization"/>
    <property type="evidence" value="ECO:0007669"/>
    <property type="project" value="InterPro"/>
</dbReference>
<dbReference type="GO" id="GO:1901379">
    <property type="term" value="P:regulation of potassium ion transmembrane transport"/>
    <property type="evidence" value="ECO:0000314"/>
    <property type="project" value="UniProtKB"/>
</dbReference>
<dbReference type="GO" id="GO:0043266">
    <property type="term" value="P:regulation of potassium ion transport"/>
    <property type="evidence" value="ECO:0000314"/>
    <property type="project" value="UniProtKB"/>
</dbReference>
<dbReference type="CDD" id="cd18421">
    <property type="entry name" value="BTB_POZ_KCNG1_2"/>
    <property type="match status" value="1"/>
</dbReference>
<dbReference type="FunFam" id="1.20.120.350:FF:000024">
    <property type="entry name" value="Potassium voltage-gated channel subfamily G member 1"/>
    <property type="match status" value="1"/>
</dbReference>
<dbReference type="FunFam" id="1.10.287.70:FF:000005">
    <property type="entry name" value="potassium voltage-gated channel subfamily G member 1"/>
    <property type="match status" value="1"/>
</dbReference>
<dbReference type="FunFam" id="3.30.710.10:FF:000019">
    <property type="entry name" value="Potassium voltage-gated channel, subfamily G, member 1"/>
    <property type="match status" value="1"/>
</dbReference>
<dbReference type="Gene3D" id="1.10.287.70">
    <property type="match status" value="1"/>
</dbReference>
<dbReference type="Gene3D" id="3.30.710.10">
    <property type="entry name" value="Potassium Channel Kv1.1, Chain A"/>
    <property type="match status" value="1"/>
</dbReference>
<dbReference type="Gene3D" id="1.20.120.350">
    <property type="entry name" value="Voltage-gated potassium channels. Chain C"/>
    <property type="match status" value="1"/>
</dbReference>
<dbReference type="InterPro" id="IPR000210">
    <property type="entry name" value="BTB/POZ_dom"/>
</dbReference>
<dbReference type="InterPro" id="IPR005821">
    <property type="entry name" value="Ion_trans_dom"/>
</dbReference>
<dbReference type="InterPro" id="IPR003968">
    <property type="entry name" value="K_chnl_volt-dep_Kv"/>
</dbReference>
<dbReference type="InterPro" id="IPR003969">
    <property type="entry name" value="K_chnl_volt-dep_Kv6"/>
</dbReference>
<dbReference type="InterPro" id="IPR011333">
    <property type="entry name" value="SKP1/BTB/POZ_sf"/>
</dbReference>
<dbReference type="InterPro" id="IPR003131">
    <property type="entry name" value="T1-type_BTB"/>
</dbReference>
<dbReference type="InterPro" id="IPR028325">
    <property type="entry name" value="VG_K_chnl"/>
</dbReference>
<dbReference type="InterPro" id="IPR027359">
    <property type="entry name" value="Volt_channel_dom_sf"/>
</dbReference>
<dbReference type="PANTHER" id="PTHR11537:SF88">
    <property type="entry name" value="POTASSIUM VOLTAGE-GATED CHANNEL SUBFAMILY G MEMBER 1"/>
    <property type="match status" value="1"/>
</dbReference>
<dbReference type="PANTHER" id="PTHR11537">
    <property type="entry name" value="VOLTAGE-GATED POTASSIUM CHANNEL"/>
    <property type="match status" value="1"/>
</dbReference>
<dbReference type="Pfam" id="PF02214">
    <property type="entry name" value="BTB_2"/>
    <property type="match status" value="1"/>
</dbReference>
<dbReference type="Pfam" id="PF00520">
    <property type="entry name" value="Ion_trans"/>
    <property type="match status" value="1"/>
</dbReference>
<dbReference type="PRINTS" id="PR00169">
    <property type="entry name" value="KCHANNEL"/>
</dbReference>
<dbReference type="PRINTS" id="PR01492">
    <property type="entry name" value="KV6CHANNEL"/>
</dbReference>
<dbReference type="PRINTS" id="PR01491">
    <property type="entry name" value="KVCHANNEL"/>
</dbReference>
<dbReference type="SMART" id="SM00225">
    <property type="entry name" value="BTB"/>
    <property type="match status" value="1"/>
</dbReference>
<dbReference type="SUPFAM" id="SSF54695">
    <property type="entry name" value="POZ domain"/>
    <property type="match status" value="1"/>
</dbReference>
<dbReference type="SUPFAM" id="SSF81324">
    <property type="entry name" value="Voltage-gated potassium channels"/>
    <property type="match status" value="1"/>
</dbReference>
<feature type="chain" id="PRO_0000433466" description="Voltage-gated potassium channel regulatory subunit KCNG1">
    <location>
        <begin position="1"/>
        <end position="514"/>
    </location>
</feature>
<feature type="topological domain" description="Cytoplasmic" evidence="1">
    <location>
        <begin position="1"/>
        <end position="224"/>
    </location>
</feature>
<feature type="transmembrane region" description="Helical; Name=Segment S1" evidence="1">
    <location>
        <begin position="225"/>
        <end position="246"/>
    </location>
</feature>
<feature type="topological domain" description="Extracellular" evidence="1">
    <location>
        <begin position="247"/>
        <end position="267"/>
    </location>
</feature>
<feature type="transmembrane region" description="Helical; Name=Segment S2" evidence="1">
    <location>
        <begin position="268"/>
        <end position="289"/>
    </location>
</feature>
<feature type="topological domain" description="Cytoplasmic" evidence="1">
    <location>
        <begin position="290"/>
        <end position="300"/>
    </location>
</feature>
<feature type="transmembrane region" description="Helical; Name=Segment S3" evidence="1">
    <location>
        <begin position="301"/>
        <end position="321"/>
    </location>
</feature>
<feature type="topological domain" description="Extracellular" evidence="1">
    <location>
        <begin position="322"/>
        <end position="338"/>
    </location>
</feature>
<feature type="transmembrane region" description="Helical; Voltage-sensor; Name=Segment S4" evidence="1">
    <location>
        <begin position="339"/>
        <end position="359"/>
    </location>
</feature>
<feature type="topological domain" description="Cytoplasmic" evidence="1">
    <location>
        <begin position="360"/>
        <end position="374"/>
    </location>
</feature>
<feature type="transmembrane region" description="Helical; Name=Segment S5" evidence="1">
    <location>
        <begin position="375"/>
        <end position="396"/>
    </location>
</feature>
<feature type="topological domain" description="Extracellular" evidence="1">
    <location>
        <begin position="397"/>
        <end position="411"/>
    </location>
</feature>
<feature type="intramembrane region" description="Helical; Name=Pore helix" evidence="1">
    <location>
        <begin position="412"/>
        <end position="423"/>
    </location>
</feature>
<feature type="intramembrane region" evidence="1">
    <location>
        <begin position="424"/>
        <end position="431"/>
    </location>
</feature>
<feature type="topological domain" description="Extracellular" evidence="1">
    <location>
        <begin position="432"/>
        <end position="438"/>
    </location>
</feature>
<feature type="transmembrane region" description="Helical; Name=Segment S6" evidence="1">
    <location>
        <begin position="439"/>
        <end position="467"/>
    </location>
</feature>
<feature type="topological domain" description="Cytoplasmic" evidence="1">
    <location>
        <begin position="468"/>
        <end position="514"/>
    </location>
</feature>
<feature type="region of interest" description="Disordered" evidence="3">
    <location>
        <begin position="181"/>
        <end position="205"/>
    </location>
</feature>
<feature type="short sequence motif" description="Selectivity filter" evidence="1">
    <location>
        <begin position="424"/>
        <end position="429"/>
    </location>
</feature>
<feature type="compositionally biased region" description="Acidic residues" evidence="3">
    <location>
        <begin position="181"/>
        <end position="196"/>
    </location>
</feature>
<name>KCNG1_RAT</name>
<reference key="1">
    <citation type="journal article" date="2004" name="Nature">
        <title>Genome sequence of the Brown Norway rat yields insights into mammalian evolution.</title>
        <authorList>
            <person name="Gibbs R.A."/>
            <person name="Weinstock G.M."/>
            <person name="Metzker M.L."/>
            <person name="Muzny D.M."/>
            <person name="Sodergren E.J."/>
            <person name="Scherer S."/>
            <person name="Scott G."/>
            <person name="Steffen D."/>
            <person name="Worley K.C."/>
            <person name="Burch P.E."/>
            <person name="Okwuonu G."/>
            <person name="Hines S."/>
            <person name="Lewis L."/>
            <person name="Deramo C."/>
            <person name="Delgado O."/>
            <person name="Dugan-Rocha S."/>
            <person name="Miner G."/>
            <person name="Morgan M."/>
            <person name="Hawes A."/>
            <person name="Gill R."/>
            <person name="Holt R.A."/>
            <person name="Adams M.D."/>
            <person name="Amanatides P.G."/>
            <person name="Baden-Tillson H."/>
            <person name="Barnstead M."/>
            <person name="Chin S."/>
            <person name="Evans C.A."/>
            <person name="Ferriera S."/>
            <person name="Fosler C."/>
            <person name="Glodek A."/>
            <person name="Gu Z."/>
            <person name="Jennings D."/>
            <person name="Kraft C.L."/>
            <person name="Nguyen T."/>
            <person name="Pfannkoch C.M."/>
            <person name="Sitter C."/>
            <person name="Sutton G.G."/>
            <person name="Venter J.C."/>
            <person name="Woodage T."/>
            <person name="Smith D."/>
            <person name="Lee H.-M."/>
            <person name="Gustafson E."/>
            <person name="Cahill P."/>
            <person name="Kana A."/>
            <person name="Doucette-Stamm L."/>
            <person name="Weinstock K."/>
            <person name="Fechtel K."/>
            <person name="Weiss R.B."/>
            <person name="Dunn D.M."/>
            <person name="Green E.D."/>
            <person name="Blakesley R.W."/>
            <person name="Bouffard G.G."/>
            <person name="De Jong P.J."/>
            <person name="Osoegawa K."/>
            <person name="Zhu B."/>
            <person name="Marra M."/>
            <person name="Schein J."/>
            <person name="Bosdet I."/>
            <person name="Fjell C."/>
            <person name="Jones S."/>
            <person name="Krzywinski M."/>
            <person name="Mathewson C."/>
            <person name="Siddiqui A."/>
            <person name="Wye N."/>
            <person name="McPherson J."/>
            <person name="Zhao S."/>
            <person name="Fraser C.M."/>
            <person name="Shetty J."/>
            <person name="Shatsman S."/>
            <person name="Geer K."/>
            <person name="Chen Y."/>
            <person name="Abramzon S."/>
            <person name="Nierman W.C."/>
            <person name="Havlak P.H."/>
            <person name="Chen R."/>
            <person name="Durbin K.J."/>
            <person name="Egan A."/>
            <person name="Ren Y."/>
            <person name="Song X.-Z."/>
            <person name="Li B."/>
            <person name="Liu Y."/>
            <person name="Qin X."/>
            <person name="Cawley S."/>
            <person name="Cooney A.J."/>
            <person name="D'Souza L.M."/>
            <person name="Martin K."/>
            <person name="Wu J.Q."/>
            <person name="Gonzalez-Garay M.L."/>
            <person name="Jackson A.R."/>
            <person name="Kalafus K.J."/>
            <person name="McLeod M.P."/>
            <person name="Milosavljevic A."/>
            <person name="Virk D."/>
            <person name="Volkov A."/>
            <person name="Wheeler D.A."/>
            <person name="Zhang Z."/>
            <person name="Bailey J.A."/>
            <person name="Eichler E.E."/>
            <person name="Tuzun E."/>
            <person name="Birney E."/>
            <person name="Mongin E."/>
            <person name="Ureta-Vidal A."/>
            <person name="Woodwark C."/>
            <person name="Zdobnov E."/>
            <person name="Bork P."/>
            <person name="Suyama M."/>
            <person name="Torrents D."/>
            <person name="Alexandersson M."/>
            <person name="Trask B.J."/>
            <person name="Young J.M."/>
            <person name="Huang H."/>
            <person name="Wang H."/>
            <person name="Xing H."/>
            <person name="Daniels S."/>
            <person name="Gietzen D."/>
            <person name="Schmidt J."/>
            <person name="Stevens K."/>
            <person name="Vitt U."/>
            <person name="Wingrove J."/>
            <person name="Camara F."/>
            <person name="Mar Alba M."/>
            <person name="Abril J.F."/>
            <person name="Guigo R."/>
            <person name="Smit A."/>
            <person name="Dubchak I."/>
            <person name="Rubin E.M."/>
            <person name="Couronne O."/>
            <person name="Poliakov A."/>
            <person name="Huebner N."/>
            <person name="Ganten D."/>
            <person name="Goesele C."/>
            <person name="Hummel O."/>
            <person name="Kreitler T."/>
            <person name="Lee Y.-A."/>
            <person name="Monti J."/>
            <person name="Schulz H."/>
            <person name="Zimdahl H."/>
            <person name="Himmelbauer H."/>
            <person name="Lehrach H."/>
            <person name="Jacob H.J."/>
            <person name="Bromberg S."/>
            <person name="Gullings-Handley J."/>
            <person name="Jensen-Seaman M.I."/>
            <person name="Kwitek A.E."/>
            <person name="Lazar J."/>
            <person name="Pasko D."/>
            <person name="Tonellato P.J."/>
            <person name="Twigger S."/>
            <person name="Ponting C.P."/>
            <person name="Duarte J.M."/>
            <person name="Rice S."/>
            <person name="Goodstadt L."/>
            <person name="Beatson S.A."/>
            <person name="Emes R.D."/>
            <person name="Winter E.E."/>
            <person name="Webber C."/>
            <person name="Brandt P."/>
            <person name="Nyakatura G."/>
            <person name="Adetobi M."/>
            <person name="Chiaromonte F."/>
            <person name="Elnitski L."/>
            <person name="Eswara P."/>
            <person name="Hardison R.C."/>
            <person name="Hou M."/>
            <person name="Kolbe D."/>
            <person name="Makova K."/>
            <person name="Miller W."/>
            <person name="Nekrutenko A."/>
            <person name="Riemer C."/>
            <person name="Schwartz S."/>
            <person name="Taylor J."/>
            <person name="Yang S."/>
            <person name="Zhang Y."/>
            <person name="Lindpaintner K."/>
            <person name="Andrews T.D."/>
            <person name="Caccamo M."/>
            <person name="Clamp M."/>
            <person name="Clarke L."/>
            <person name="Curwen V."/>
            <person name="Durbin R.M."/>
            <person name="Eyras E."/>
            <person name="Searle S.M."/>
            <person name="Cooper G.M."/>
            <person name="Batzoglou S."/>
            <person name="Brudno M."/>
            <person name="Sidow A."/>
            <person name="Stone E.A."/>
            <person name="Payseur B.A."/>
            <person name="Bourque G."/>
            <person name="Lopez-Otin C."/>
            <person name="Puente X.S."/>
            <person name="Chakrabarti K."/>
            <person name="Chatterji S."/>
            <person name="Dewey C."/>
            <person name="Pachter L."/>
            <person name="Bray N."/>
            <person name="Yap V.B."/>
            <person name="Caspi A."/>
            <person name="Tesler G."/>
            <person name="Pevzner P.A."/>
            <person name="Haussler D."/>
            <person name="Roskin K.M."/>
            <person name="Baertsch R."/>
            <person name="Clawson H."/>
            <person name="Furey T.S."/>
            <person name="Hinrichs A.S."/>
            <person name="Karolchik D."/>
            <person name="Kent W.J."/>
            <person name="Rosenbloom K.R."/>
            <person name="Trumbower H."/>
            <person name="Weirauch M."/>
            <person name="Cooper D.N."/>
            <person name="Stenson P.D."/>
            <person name="Ma B."/>
            <person name="Brent M."/>
            <person name="Arumugam M."/>
            <person name="Shteynberg D."/>
            <person name="Copley R.R."/>
            <person name="Taylor M.S."/>
            <person name="Riethman H."/>
            <person name="Mudunuri U."/>
            <person name="Peterson J."/>
            <person name="Guyer M."/>
            <person name="Felsenfeld A."/>
            <person name="Old S."/>
            <person name="Mockrin S."/>
            <person name="Collins F.S."/>
        </authorList>
    </citation>
    <scope>NUCLEOTIDE SEQUENCE [LARGE SCALE GENOMIC DNA]</scope>
    <source>
        <strain>Brown Norway</strain>
    </source>
</reference>
<reference key="2">
    <citation type="submission" date="2005-09" db="EMBL/GenBank/DDBJ databases">
        <authorList>
            <person name="Mural R.J."/>
            <person name="Adams M.D."/>
            <person name="Myers E.W."/>
            <person name="Smith H.O."/>
            <person name="Venter J.C."/>
        </authorList>
    </citation>
    <scope>NUCLEOTIDE SEQUENCE [LARGE SCALE GENOMIC DNA]</scope>
</reference>
<reference key="3">
    <citation type="journal article" date="1996" name="FEBS Lett.">
        <title>Kv2.1 and electrically silent Kv6.1 potassium channel subunits combine and express a novel current.</title>
        <authorList>
            <person name="Post M.A."/>
            <person name="Kirsch G.E."/>
            <person name="Brown A.M."/>
        </authorList>
    </citation>
    <scope>FUNCTION</scope>
    <scope>SUBUNIT</scope>
</reference>
<reference key="4">
    <citation type="journal article" date="1997" name="J. Biol. Chem.">
        <title>New modulatory alpha subunits for mammalian Shab K+ channels.</title>
        <authorList>
            <person name="Salinas M."/>
            <person name="Duprat F."/>
            <person name="Heurteaux C."/>
            <person name="Hugnot J.-P."/>
            <person name="Lazdunski M."/>
        </authorList>
    </citation>
    <scope>FUNCTION</scope>
    <scope>SUBUNIT</scope>
</reference>
<reference key="5">
    <citation type="journal article" date="1998" name="Am. J. Physiol.">
        <title>Modulation of potassium channel gating by coexpression of Kv2.1 with regulatory Kv5.1 or Kv6.1 alpha-subunits.</title>
        <authorList>
            <person name="Kramer J.W."/>
            <person name="Post M.A."/>
            <person name="Brown A.M."/>
            <person name="Kirsch G.E."/>
        </authorList>
    </citation>
    <scope>FUNCTION</scope>
    <scope>SUBUNIT</scope>
</reference>
<gene>
    <name evidence="10" type="primary">Kcng1</name>
</gene>
<comment type="function">
    <text evidence="4 5 6">Regulatory alpha-subunit of the voltage-gated potassium (Kv) channel which, when coassembled with KCNB1 or KCNB2, can modulate their expression and their gating kinetics by acting on deactivation upon repolarization and inactivation during maintained depolarization (PubMed:8980147, PubMed:9305895, PubMed:9696692). Potassium channel subunit that does not form functional channels by itself (PubMed:8980147, PubMed:9305895).</text>
</comment>
<comment type="subunit">
    <text evidence="6 8 9">Heterotetramer with KCNB1 or KCNB2.</text>
</comment>
<comment type="subcellular location">
    <subcellularLocation>
        <location evidence="2">Cell membrane</location>
        <topology evidence="7">Multi-pass membrane protein</topology>
    </subcellularLocation>
</comment>
<comment type="domain">
    <text evidence="1">The transmembrane segment S4 functions as a voltage-sensor and is characterized by a series of positively charged amino acids at every third position. Channel opening and closing is effected by a conformation change that affects the position and orientation of the voltage-sensor paddle formed by S3 and S4 within the membrane. A transmembrane electric field that is positive inside would push the positively charged S4 segment outwards, thereby opening the pore, while a field that is negative inside would pull the S4 segment inwards and close the pore. Changes in the position and orientation of S4 are then transmitted to the activation gate formed by the inner helix bundle via the S4-S5 linker region.</text>
</comment>
<comment type="similarity">
    <text evidence="7">Belongs to the potassium channel family. G (TC 1.A.1.2) subfamily. Kv6.1/KCNG1 sub-subfamily.</text>
</comment>
<keyword id="KW-1003">Cell membrane</keyword>
<keyword id="KW-0407">Ion channel</keyword>
<keyword id="KW-0406">Ion transport</keyword>
<keyword id="KW-0472">Membrane</keyword>
<keyword id="KW-0630">Potassium</keyword>
<keyword id="KW-0631">Potassium channel</keyword>
<keyword id="KW-0633">Potassium transport</keyword>
<keyword id="KW-1185">Reference proteome</keyword>
<keyword id="KW-0812">Transmembrane</keyword>
<keyword id="KW-1133">Transmembrane helix</keyword>
<keyword id="KW-0813">Transport</keyword>
<keyword id="KW-0851">Voltage-gated channel</keyword>
<organism>
    <name type="scientific">Rattus norvegicus</name>
    <name type="common">Rat</name>
    <dbReference type="NCBI Taxonomy" id="10116"/>
    <lineage>
        <taxon>Eukaryota</taxon>
        <taxon>Metazoa</taxon>
        <taxon>Chordata</taxon>
        <taxon>Craniata</taxon>
        <taxon>Vertebrata</taxon>
        <taxon>Euteleostomi</taxon>
        <taxon>Mammalia</taxon>
        <taxon>Eutheria</taxon>
        <taxon>Euarchontoglires</taxon>
        <taxon>Glires</taxon>
        <taxon>Rodentia</taxon>
        <taxon>Myomorpha</taxon>
        <taxon>Muroidea</taxon>
        <taxon>Muridae</taxon>
        <taxon>Murinae</taxon>
        <taxon>Rattus</taxon>
    </lineage>
</organism>
<accession>D4AD53</accession>
<evidence type="ECO:0000250" key="1">
    <source>
        <dbReference type="UniProtKB" id="P63142"/>
    </source>
</evidence>
<evidence type="ECO:0000250" key="2">
    <source>
        <dbReference type="UniProtKB" id="Q14721"/>
    </source>
</evidence>
<evidence type="ECO:0000256" key="3">
    <source>
        <dbReference type="SAM" id="MobiDB-lite"/>
    </source>
</evidence>
<evidence type="ECO:0000269" key="4">
    <source>
    </source>
</evidence>
<evidence type="ECO:0000269" key="5">
    <source>
    </source>
</evidence>
<evidence type="ECO:0000269" key="6">
    <source>
    </source>
</evidence>
<evidence type="ECO:0000305" key="7"/>
<evidence type="ECO:0000305" key="8">
    <source>
    </source>
</evidence>
<evidence type="ECO:0000305" key="9">
    <source>
    </source>
</evidence>
<evidence type="ECO:0000312" key="10">
    <source>
        <dbReference type="RGD" id="631416"/>
    </source>
</evidence>
<proteinExistence type="evidence at protein level"/>
<protein>
    <recommendedName>
        <fullName evidence="7">Voltage-gated potassium channel regulatory subunit KCNG1</fullName>
    </recommendedName>
    <alternativeName>
        <fullName>Potassium voltage-gated channel subfamily G member 1</fullName>
    </alternativeName>
    <alternativeName>
        <fullName>Voltage-gated potassium channel subunit Kv6.1</fullName>
    </alternativeName>
</protein>